<organism>
    <name type="scientific">Streptococcus pneumoniae (strain JJA)</name>
    <dbReference type="NCBI Taxonomy" id="488222"/>
    <lineage>
        <taxon>Bacteria</taxon>
        <taxon>Bacillati</taxon>
        <taxon>Bacillota</taxon>
        <taxon>Bacilli</taxon>
        <taxon>Lactobacillales</taxon>
        <taxon>Streptococcaceae</taxon>
        <taxon>Streptococcus</taxon>
    </lineage>
</organism>
<comment type="function">
    <text evidence="1">Catalyzes the reduction of the glycolytic intermediate dihydroxyacetone phosphate (DHAP) to sn-glycerol 3-phosphate (G3P), the key precursor for phospholipid synthesis.</text>
</comment>
<comment type="catalytic activity">
    <reaction evidence="1">
        <text>sn-glycerol 3-phosphate + NAD(+) = dihydroxyacetone phosphate + NADH + H(+)</text>
        <dbReference type="Rhea" id="RHEA:11092"/>
        <dbReference type="ChEBI" id="CHEBI:15378"/>
        <dbReference type="ChEBI" id="CHEBI:57540"/>
        <dbReference type="ChEBI" id="CHEBI:57597"/>
        <dbReference type="ChEBI" id="CHEBI:57642"/>
        <dbReference type="ChEBI" id="CHEBI:57945"/>
        <dbReference type="EC" id="1.1.1.94"/>
    </reaction>
    <physiologicalReaction direction="right-to-left" evidence="1">
        <dbReference type="Rhea" id="RHEA:11094"/>
    </physiologicalReaction>
</comment>
<comment type="catalytic activity">
    <reaction evidence="1">
        <text>sn-glycerol 3-phosphate + NADP(+) = dihydroxyacetone phosphate + NADPH + H(+)</text>
        <dbReference type="Rhea" id="RHEA:11096"/>
        <dbReference type="ChEBI" id="CHEBI:15378"/>
        <dbReference type="ChEBI" id="CHEBI:57597"/>
        <dbReference type="ChEBI" id="CHEBI:57642"/>
        <dbReference type="ChEBI" id="CHEBI:57783"/>
        <dbReference type="ChEBI" id="CHEBI:58349"/>
        <dbReference type="EC" id="1.1.1.94"/>
    </reaction>
    <physiologicalReaction direction="right-to-left" evidence="1">
        <dbReference type="Rhea" id="RHEA:11098"/>
    </physiologicalReaction>
</comment>
<comment type="pathway">
    <text evidence="1">Membrane lipid metabolism; glycerophospholipid metabolism.</text>
</comment>
<comment type="subcellular location">
    <subcellularLocation>
        <location evidence="1">Cytoplasm</location>
    </subcellularLocation>
</comment>
<comment type="similarity">
    <text evidence="1">Belongs to the NAD-dependent glycerol-3-phosphate dehydrogenase family.</text>
</comment>
<dbReference type="EC" id="1.1.1.94" evidence="1"/>
<dbReference type="EMBL" id="CP000919">
    <property type="protein sequence ID" value="ACO18326.1"/>
    <property type="molecule type" value="Genomic_DNA"/>
</dbReference>
<dbReference type="RefSeq" id="WP_000415108.1">
    <property type="nucleotide sequence ID" value="NC_012466.1"/>
</dbReference>
<dbReference type="SMR" id="C1CH20"/>
<dbReference type="KEGG" id="sjj:SPJ_2112"/>
<dbReference type="HOGENOM" id="CLU_033449_0_2_9"/>
<dbReference type="UniPathway" id="UPA00940"/>
<dbReference type="Proteomes" id="UP000002206">
    <property type="component" value="Chromosome"/>
</dbReference>
<dbReference type="GO" id="GO:0005829">
    <property type="term" value="C:cytosol"/>
    <property type="evidence" value="ECO:0007669"/>
    <property type="project" value="TreeGrafter"/>
</dbReference>
<dbReference type="GO" id="GO:0047952">
    <property type="term" value="F:glycerol-3-phosphate dehydrogenase [NAD(P)+] activity"/>
    <property type="evidence" value="ECO:0007669"/>
    <property type="project" value="UniProtKB-UniRule"/>
</dbReference>
<dbReference type="GO" id="GO:0051287">
    <property type="term" value="F:NAD binding"/>
    <property type="evidence" value="ECO:0007669"/>
    <property type="project" value="InterPro"/>
</dbReference>
<dbReference type="GO" id="GO:0005975">
    <property type="term" value="P:carbohydrate metabolic process"/>
    <property type="evidence" value="ECO:0007669"/>
    <property type="project" value="InterPro"/>
</dbReference>
<dbReference type="GO" id="GO:0046167">
    <property type="term" value="P:glycerol-3-phosphate biosynthetic process"/>
    <property type="evidence" value="ECO:0007669"/>
    <property type="project" value="UniProtKB-UniRule"/>
</dbReference>
<dbReference type="GO" id="GO:0046168">
    <property type="term" value="P:glycerol-3-phosphate catabolic process"/>
    <property type="evidence" value="ECO:0007669"/>
    <property type="project" value="InterPro"/>
</dbReference>
<dbReference type="GO" id="GO:0006650">
    <property type="term" value="P:glycerophospholipid metabolic process"/>
    <property type="evidence" value="ECO:0007669"/>
    <property type="project" value="UniProtKB-UniRule"/>
</dbReference>
<dbReference type="GO" id="GO:0008654">
    <property type="term" value="P:phospholipid biosynthetic process"/>
    <property type="evidence" value="ECO:0007669"/>
    <property type="project" value="UniProtKB-KW"/>
</dbReference>
<dbReference type="FunFam" id="1.10.1040.10:FF:000001">
    <property type="entry name" value="Glycerol-3-phosphate dehydrogenase [NAD(P)+]"/>
    <property type="match status" value="1"/>
</dbReference>
<dbReference type="FunFam" id="3.40.50.720:FF:000019">
    <property type="entry name" value="Glycerol-3-phosphate dehydrogenase [NAD(P)+]"/>
    <property type="match status" value="1"/>
</dbReference>
<dbReference type="Gene3D" id="1.10.1040.10">
    <property type="entry name" value="N-(1-d-carboxylethyl)-l-norvaline Dehydrogenase, domain 2"/>
    <property type="match status" value="1"/>
</dbReference>
<dbReference type="Gene3D" id="3.40.50.720">
    <property type="entry name" value="NAD(P)-binding Rossmann-like Domain"/>
    <property type="match status" value="1"/>
</dbReference>
<dbReference type="HAMAP" id="MF_00394">
    <property type="entry name" value="NAD_Glyc3P_dehydrog"/>
    <property type="match status" value="1"/>
</dbReference>
<dbReference type="InterPro" id="IPR008927">
    <property type="entry name" value="6-PGluconate_DH-like_C_sf"/>
</dbReference>
<dbReference type="InterPro" id="IPR013328">
    <property type="entry name" value="6PGD_dom2"/>
</dbReference>
<dbReference type="InterPro" id="IPR006168">
    <property type="entry name" value="G3P_DH_NAD-dep"/>
</dbReference>
<dbReference type="InterPro" id="IPR006109">
    <property type="entry name" value="G3P_DH_NAD-dep_C"/>
</dbReference>
<dbReference type="InterPro" id="IPR011128">
    <property type="entry name" value="G3P_DH_NAD-dep_N"/>
</dbReference>
<dbReference type="InterPro" id="IPR036291">
    <property type="entry name" value="NAD(P)-bd_dom_sf"/>
</dbReference>
<dbReference type="NCBIfam" id="NF000940">
    <property type="entry name" value="PRK00094.1-2"/>
    <property type="match status" value="1"/>
</dbReference>
<dbReference type="NCBIfam" id="NF000941">
    <property type="entry name" value="PRK00094.1-3"/>
    <property type="match status" value="1"/>
</dbReference>
<dbReference type="NCBIfam" id="NF000942">
    <property type="entry name" value="PRK00094.1-4"/>
    <property type="match status" value="1"/>
</dbReference>
<dbReference type="PANTHER" id="PTHR11728">
    <property type="entry name" value="GLYCEROL-3-PHOSPHATE DEHYDROGENASE"/>
    <property type="match status" value="1"/>
</dbReference>
<dbReference type="PANTHER" id="PTHR11728:SF1">
    <property type="entry name" value="GLYCEROL-3-PHOSPHATE DEHYDROGENASE [NAD(+)] 2, CHLOROPLASTIC"/>
    <property type="match status" value="1"/>
</dbReference>
<dbReference type="Pfam" id="PF07479">
    <property type="entry name" value="NAD_Gly3P_dh_C"/>
    <property type="match status" value="1"/>
</dbReference>
<dbReference type="Pfam" id="PF01210">
    <property type="entry name" value="NAD_Gly3P_dh_N"/>
    <property type="match status" value="1"/>
</dbReference>
<dbReference type="PIRSF" id="PIRSF000114">
    <property type="entry name" value="Glycerol-3-P_dh"/>
    <property type="match status" value="1"/>
</dbReference>
<dbReference type="PRINTS" id="PR00077">
    <property type="entry name" value="GPDHDRGNASE"/>
</dbReference>
<dbReference type="SUPFAM" id="SSF48179">
    <property type="entry name" value="6-phosphogluconate dehydrogenase C-terminal domain-like"/>
    <property type="match status" value="1"/>
</dbReference>
<dbReference type="SUPFAM" id="SSF51735">
    <property type="entry name" value="NAD(P)-binding Rossmann-fold domains"/>
    <property type="match status" value="1"/>
</dbReference>
<dbReference type="PROSITE" id="PS00957">
    <property type="entry name" value="NAD_G3PDH"/>
    <property type="match status" value="1"/>
</dbReference>
<name>GPDA_STRZJ</name>
<proteinExistence type="inferred from homology"/>
<gene>
    <name evidence="1" type="primary">gpsA</name>
    <name type="ordered locus">SPJ_2112</name>
</gene>
<reference key="1">
    <citation type="journal article" date="2010" name="Genome Biol.">
        <title>Structure and dynamics of the pan-genome of Streptococcus pneumoniae and closely related species.</title>
        <authorList>
            <person name="Donati C."/>
            <person name="Hiller N.L."/>
            <person name="Tettelin H."/>
            <person name="Muzzi A."/>
            <person name="Croucher N.J."/>
            <person name="Angiuoli S.V."/>
            <person name="Oggioni M."/>
            <person name="Dunning Hotopp J.C."/>
            <person name="Hu F.Z."/>
            <person name="Riley D.R."/>
            <person name="Covacci A."/>
            <person name="Mitchell T.J."/>
            <person name="Bentley S.D."/>
            <person name="Kilian M."/>
            <person name="Ehrlich G.D."/>
            <person name="Rappuoli R."/>
            <person name="Moxon E.R."/>
            <person name="Masignani V."/>
        </authorList>
    </citation>
    <scope>NUCLEOTIDE SEQUENCE [LARGE SCALE GENOMIC DNA]</scope>
    <source>
        <strain>JJA</strain>
    </source>
</reference>
<protein>
    <recommendedName>
        <fullName evidence="1">Glycerol-3-phosphate dehydrogenase [NAD(P)+]</fullName>
        <ecNumber evidence="1">1.1.1.94</ecNumber>
    </recommendedName>
    <alternativeName>
        <fullName evidence="1">NAD(P)(+)-dependent glycerol-3-phosphate dehydrogenase</fullName>
    </alternativeName>
    <alternativeName>
        <fullName evidence="1">NAD(P)H-dependent dihydroxyacetone-phosphate reductase</fullName>
    </alternativeName>
</protein>
<feature type="chain" id="PRO_1000190175" description="Glycerol-3-phosphate dehydrogenase [NAD(P)+]">
    <location>
        <begin position="1"/>
        <end position="338"/>
    </location>
</feature>
<feature type="active site" description="Proton acceptor" evidence="1">
    <location>
        <position position="194"/>
    </location>
</feature>
<feature type="binding site" evidence="1">
    <location>
        <position position="13"/>
    </location>
    <ligand>
        <name>NADPH</name>
        <dbReference type="ChEBI" id="CHEBI:57783"/>
    </ligand>
</feature>
<feature type="binding site" evidence="1">
    <location>
        <position position="14"/>
    </location>
    <ligand>
        <name>NADPH</name>
        <dbReference type="ChEBI" id="CHEBI:57783"/>
    </ligand>
</feature>
<feature type="binding site" evidence="1">
    <location>
        <position position="108"/>
    </location>
    <ligand>
        <name>NADPH</name>
        <dbReference type="ChEBI" id="CHEBI:57783"/>
    </ligand>
</feature>
<feature type="binding site" evidence="1">
    <location>
        <position position="108"/>
    </location>
    <ligand>
        <name>sn-glycerol 3-phosphate</name>
        <dbReference type="ChEBI" id="CHEBI:57597"/>
    </ligand>
</feature>
<feature type="binding site" evidence="1">
    <location>
        <position position="139"/>
    </location>
    <ligand>
        <name>sn-glycerol 3-phosphate</name>
        <dbReference type="ChEBI" id="CHEBI:57597"/>
    </ligand>
</feature>
<feature type="binding site" evidence="1">
    <location>
        <position position="141"/>
    </location>
    <ligand>
        <name>sn-glycerol 3-phosphate</name>
        <dbReference type="ChEBI" id="CHEBI:57597"/>
    </ligand>
</feature>
<feature type="binding site" evidence="1">
    <location>
        <position position="143"/>
    </location>
    <ligand>
        <name>NADPH</name>
        <dbReference type="ChEBI" id="CHEBI:57783"/>
    </ligand>
</feature>
<feature type="binding site" evidence="1">
    <location>
        <position position="194"/>
    </location>
    <ligand>
        <name>sn-glycerol 3-phosphate</name>
        <dbReference type="ChEBI" id="CHEBI:57597"/>
    </ligand>
</feature>
<feature type="binding site" evidence="1">
    <location>
        <position position="247"/>
    </location>
    <ligand>
        <name>sn-glycerol 3-phosphate</name>
        <dbReference type="ChEBI" id="CHEBI:57597"/>
    </ligand>
</feature>
<feature type="binding site" evidence="1">
    <location>
        <position position="257"/>
    </location>
    <ligand>
        <name>sn-glycerol 3-phosphate</name>
        <dbReference type="ChEBI" id="CHEBI:57597"/>
    </ligand>
</feature>
<feature type="binding site" evidence="1">
    <location>
        <position position="258"/>
    </location>
    <ligand>
        <name>NADPH</name>
        <dbReference type="ChEBI" id="CHEBI:57783"/>
    </ligand>
</feature>
<feature type="binding site" evidence="1">
    <location>
        <position position="258"/>
    </location>
    <ligand>
        <name>sn-glycerol 3-phosphate</name>
        <dbReference type="ChEBI" id="CHEBI:57597"/>
    </ligand>
</feature>
<feature type="binding site" evidence="1">
    <location>
        <position position="259"/>
    </location>
    <ligand>
        <name>sn-glycerol 3-phosphate</name>
        <dbReference type="ChEBI" id="CHEBI:57597"/>
    </ligand>
</feature>
<feature type="binding site" evidence="1">
    <location>
        <position position="282"/>
    </location>
    <ligand>
        <name>NADPH</name>
        <dbReference type="ChEBI" id="CHEBI:57783"/>
    </ligand>
</feature>
<feature type="binding site" evidence="1">
    <location>
        <position position="284"/>
    </location>
    <ligand>
        <name>NADPH</name>
        <dbReference type="ChEBI" id="CHEBI:57783"/>
    </ligand>
</feature>
<accession>C1CH20</accession>
<keyword id="KW-0963">Cytoplasm</keyword>
<keyword id="KW-0444">Lipid biosynthesis</keyword>
<keyword id="KW-0443">Lipid metabolism</keyword>
<keyword id="KW-0520">NAD</keyword>
<keyword id="KW-0521">NADP</keyword>
<keyword id="KW-0547">Nucleotide-binding</keyword>
<keyword id="KW-0560">Oxidoreductase</keyword>
<keyword id="KW-0594">Phospholipid biosynthesis</keyword>
<keyword id="KW-1208">Phospholipid metabolism</keyword>
<sequence length="338" mass="36777">MEKQTVAVLGPGSWGTALSQVLNDNGHEVRIWGNLPEQINEINTHHTNKHYFKDVVLDENIIAYTDLAETLKNVDAILFVVPTKVTRLVAQQVAQTLDHKVIIMHASKGLEPDSHKRLSTILEEEIPEHLRSDIVVVSGPSHAEETIVRDLTLITAASKDLQTAQYVQELFSNHYFRLYTNTDVIGVETAGALKNIIAVGAGALHGLGFGDNAKAAIIARGLAEITRLGVALGASPLTYSGLSGVGDLIVTGTSIHSRNWRAGDALGRGESLADIEANMGMVIEGISTTRAAYELAQELGVYMPITQAIYQVIYHGTNIKDAIYDIMNNEFKAENEWS</sequence>
<evidence type="ECO:0000255" key="1">
    <source>
        <dbReference type="HAMAP-Rule" id="MF_00394"/>
    </source>
</evidence>